<evidence type="ECO:0000255" key="1">
    <source>
        <dbReference type="HAMAP-Rule" id="MF_00545"/>
    </source>
</evidence>
<evidence type="ECO:0000305" key="2"/>
<name>RS24_METBF</name>
<proteinExistence type="inferred from homology"/>
<organism>
    <name type="scientific">Methanosarcina barkeri (strain Fusaro / DSM 804)</name>
    <dbReference type="NCBI Taxonomy" id="269797"/>
    <lineage>
        <taxon>Archaea</taxon>
        <taxon>Methanobacteriati</taxon>
        <taxon>Methanobacteriota</taxon>
        <taxon>Stenosarchaea group</taxon>
        <taxon>Methanomicrobia</taxon>
        <taxon>Methanosarcinales</taxon>
        <taxon>Methanosarcinaceae</taxon>
        <taxon>Methanosarcina</taxon>
    </lineage>
</organism>
<protein>
    <recommendedName>
        <fullName evidence="1">Small ribosomal subunit protein eS24</fullName>
    </recommendedName>
    <alternativeName>
        <fullName evidence="2">30S ribosomal protein S24e</fullName>
    </alternativeName>
</protein>
<reference key="1">
    <citation type="journal article" date="2006" name="J. Bacteriol.">
        <title>The Methanosarcina barkeri genome: comparative analysis with Methanosarcina acetivorans and Methanosarcina mazei reveals extensive rearrangement within methanosarcinal genomes.</title>
        <authorList>
            <person name="Maeder D.L."/>
            <person name="Anderson I."/>
            <person name="Brettin T.S."/>
            <person name="Bruce D.C."/>
            <person name="Gilna P."/>
            <person name="Han C.S."/>
            <person name="Lapidus A."/>
            <person name="Metcalf W.W."/>
            <person name="Saunders E."/>
            <person name="Tapia R."/>
            <person name="Sowers K.R."/>
        </authorList>
    </citation>
    <scope>NUCLEOTIDE SEQUENCE [LARGE SCALE GENOMIC DNA]</scope>
    <source>
        <strain>Fusaro / DSM 804</strain>
    </source>
</reference>
<dbReference type="EMBL" id="CP000099">
    <property type="protein sequence ID" value="AAZ69266.1"/>
    <property type="molecule type" value="Genomic_DNA"/>
</dbReference>
<dbReference type="SMR" id="Q46FS6"/>
<dbReference type="STRING" id="269797.Mbar_A0282"/>
<dbReference type="PaxDb" id="269797-Mbar_A0282"/>
<dbReference type="KEGG" id="mba:Mbar_A0282"/>
<dbReference type="eggNOG" id="arCOG04182">
    <property type="taxonomic scope" value="Archaea"/>
</dbReference>
<dbReference type="HOGENOM" id="CLU_107248_3_1_2"/>
<dbReference type="OrthoDB" id="27533at2157"/>
<dbReference type="GO" id="GO:1990904">
    <property type="term" value="C:ribonucleoprotein complex"/>
    <property type="evidence" value="ECO:0007669"/>
    <property type="project" value="UniProtKB-KW"/>
</dbReference>
<dbReference type="GO" id="GO:0005840">
    <property type="term" value="C:ribosome"/>
    <property type="evidence" value="ECO:0007669"/>
    <property type="project" value="UniProtKB-KW"/>
</dbReference>
<dbReference type="GO" id="GO:0003735">
    <property type="term" value="F:structural constituent of ribosome"/>
    <property type="evidence" value="ECO:0007669"/>
    <property type="project" value="InterPro"/>
</dbReference>
<dbReference type="GO" id="GO:0006412">
    <property type="term" value="P:translation"/>
    <property type="evidence" value="ECO:0007669"/>
    <property type="project" value="UniProtKB-UniRule"/>
</dbReference>
<dbReference type="Gene3D" id="3.30.70.330">
    <property type="match status" value="1"/>
</dbReference>
<dbReference type="HAMAP" id="MF_00545">
    <property type="entry name" value="Ribosomal_eS24"/>
    <property type="match status" value="1"/>
</dbReference>
<dbReference type="InterPro" id="IPR012677">
    <property type="entry name" value="Nucleotide-bd_a/b_plait_sf"/>
</dbReference>
<dbReference type="InterPro" id="IPR001976">
    <property type="entry name" value="Ribosomal_eS24"/>
</dbReference>
<dbReference type="InterPro" id="IPR012678">
    <property type="entry name" value="Ribosomal_uL23/eL15/eS24_sf"/>
</dbReference>
<dbReference type="PANTHER" id="PTHR10496">
    <property type="entry name" value="40S RIBOSOMAL PROTEIN S24"/>
    <property type="match status" value="1"/>
</dbReference>
<dbReference type="Pfam" id="PF01282">
    <property type="entry name" value="Ribosomal_S24e"/>
    <property type="match status" value="1"/>
</dbReference>
<dbReference type="SUPFAM" id="SSF54189">
    <property type="entry name" value="Ribosomal proteins S24e, L23 and L15e"/>
    <property type="match status" value="1"/>
</dbReference>
<keyword id="KW-0687">Ribonucleoprotein</keyword>
<keyword id="KW-0689">Ribosomal protein</keyword>
<sequence>MDIRILKDKNNALLNRRELDFIVKYEGSTPSRNDVRNKLAAMLNAPLELVVVQRLKTEYGMQEGKGYAKIYENADRMKDVELEYVLKRNVAPGMETEGEEA</sequence>
<accession>Q46FS6</accession>
<feature type="chain" id="PRO_1000017739" description="Small ribosomal subunit protein eS24">
    <location>
        <begin position="1"/>
        <end position="101"/>
    </location>
</feature>
<comment type="similarity">
    <text evidence="1">Belongs to the eukaryotic ribosomal protein eS24 family.</text>
</comment>
<gene>
    <name evidence="1" type="primary">rps24e</name>
    <name type="ordered locus">Mbar_A0282</name>
</gene>